<feature type="chain" id="PRO_0000136024" description="Shikimate dehydrogenase (NADP(+))">
    <location>
        <begin position="1"/>
        <end position="269"/>
    </location>
</feature>
<feature type="active site" description="Proton acceptor" evidence="1">
    <location>
        <position position="65"/>
    </location>
</feature>
<feature type="binding site" evidence="1">
    <location>
        <begin position="14"/>
        <end position="16"/>
    </location>
    <ligand>
        <name>shikimate</name>
        <dbReference type="ChEBI" id="CHEBI:36208"/>
    </ligand>
</feature>
<feature type="binding site" evidence="1">
    <location>
        <position position="61"/>
    </location>
    <ligand>
        <name>shikimate</name>
        <dbReference type="ChEBI" id="CHEBI:36208"/>
    </ligand>
</feature>
<feature type="binding site" evidence="1">
    <location>
        <position position="77"/>
    </location>
    <ligand>
        <name>NADP(+)</name>
        <dbReference type="ChEBI" id="CHEBI:58349"/>
    </ligand>
</feature>
<feature type="binding site" evidence="1">
    <location>
        <position position="86"/>
    </location>
    <ligand>
        <name>shikimate</name>
        <dbReference type="ChEBI" id="CHEBI:36208"/>
    </ligand>
</feature>
<feature type="binding site" evidence="1">
    <location>
        <position position="102"/>
    </location>
    <ligand>
        <name>shikimate</name>
        <dbReference type="ChEBI" id="CHEBI:36208"/>
    </ligand>
</feature>
<feature type="binding site" evidence="1">
    <location>
        <begin position="126"/>
        <end position="130"/>
    </location>
    <ligand>
        <name>NADP(+)</name>
        <dbReference type="ChEBI" id="CHEBI:58349"/>
    </ligand>
</feature>
<feature type="binding site" evidence="1">
    <location>
        <begin position="149"/>
        <end position="154"/>
    </location>
    <ligand>
        <name>NADP(+)</name>
        <dbReference type="ChEBI" id="CHEBI:58349"/>
    </ligand>
</feature>
<feature type="binding site" evidence="1">
    <location>
        <position position="213"/>
    </location>
    <ligand>
        <name>NADP(+)</name>
        <dbReference type="ChEBI" id="CHEBI:58349"/>
    </ligand>
</feature>
<feature type="binding site" evidence="1">
    <location>
        <position position="215"/>
    </location>
    <ligand>
        <name>shikimate</name>
        <dbReference type="ChEBI" id="CHEBI:36208"/>
    </ligand>
</feature>
<feature type="binding site" evidence="1">
    <location>
        <position position="238"/>
    </location>
    <ligand>
        <name>NADP(+)</name>
        <dbReference type="ChEBI" id="CHEBI:58349"/>
    </ligand>
</feature>
<gene>
    <name evidence="1" type="primary">aroE</name>
    <name type="ordered locus">PM1271</name>
</gene>
<evidence type="ECO:0000255" key="1">
    <source>
        <dbReference type="HAMAP-Rule" id="MF_00222"/>
    </source>
</evidence>
<accession>P57932</accession>
<organism>
    <name type="scientific">Pasteurella multocida (strain Pm70)</name>
    <dbReference type="NCBI Taxonomy" id="272843"/>
    <lineage>
        <taxon>Bacteria</taxon>
        <taxon>Pseudomonadati</taxon>
        <taxon>Pseudomonadota</taxon>
        <taxon>Gammaproteobacteria</taxon>
        <taxon>Pasteurellales</taxon>
        <taxon>Pasteurellaceae</taxon>
        <taxon>Pasteurella</taxon>
    </lineage>
</organism>
<name>AROE_PASMU</name>
<keyword id="KW-0028">Amino-acid biosynthesis</keyword>
<keyword id="KW-0057">Aromatic amino acid biosynthesis</keyword>
<keyword id="KW-0521">NADP</keyword>
<keyword id="KW-0560">Oxidoreductase</keyword>
<keyword id="KW-1185">Reference proteome</keyword>
<protein>
    <recommendedName>
        <fullName evidence="1">Shikimate dehydrogenase (NADP(+))</fullName>
        <shortName evidence="1">SDH</shortName>
        <ecNumber evidence="1">1.1.1.25</ecNumber>
    </recommendedName>
</protein>
<dbReference type="EC" id="1.1.1.25" evidence="1"/>
<dbReference type="EMBL" id="AE004439">
    <property type="protein sequence ID" value="AAK03355.1"/>
    <property type="molecule type" value="Genomic_DNA"/>
</dbReference>
<dbReference type="RefSeq" id="WP_010907104.1">
    <property type="nucleotide sequence ID" value="NC_002663.1"/>
</dbReference>
<dbReference type="SMR" id="P57932"/>
<dbReference type="STRING" id="272843.PM1271"/>
<dbReference type="EnsemblBacteria" id="AAK03355">
    <property type="protein sequence ID" value="AAK03355"/>
    <property type="gene ID" value="PM1271"/>
</dbReference>
<dbReference type="KEGG" id="pmu:PM1271"/>
<dbReference type="PATRIC" id="fig|272843.6.peg.1282"/>
<dbReference type="HOGENOM" id="CLU_044063_2_1_6"/>
<dbReference type="OrthoDB" id="9776868at2"/>
<dbReference type="UniPathway" id="UPA00053">
    <property type="reaction ID" value="UER00087"/>
</dbReference>
<dbReference type="Proteomes" id="UP000000809">
    <property type="component" value="Chromosome"/>
</dbReference>
<dbReference type="GO" id="GO:0005829">
    <property type="term" value="C:cytosol"/>
    <property type="evidence" value="ECO:0007669"/>
    <property type="project" value="TreeGrafter"/>
</dbReference>
<dbReference type="GO" id="GO:0050661">
    <property type="term" value="F:NADP binding"/>
    <property type="evidence" value="ECO:0007669"/>
    <property type="project" value="InterPro"/>
</dbReference>
<dbReference type="GO" id="GO:0004764">
    <property type="term" value="F:shikimate 3-dehydrogenase (NADP+) activity"/>
    <property type="evidence" value="ECO:0007669"/>
    <property type="project" value="UniProtKB-UniRule"/>
</dbReference>
<dbReference type="GO" id="GO:0008652">
    <property type="term" value="P:amino acid biosynthetic process"/>
    <property type="evidence" value="ECO:0007669"/>
    <property type="project" value="UniProtKB-KW"/>
</dbReference>
<dbReference type="GO" id="GO:0009073">
    <property type="term" value="P:aromatic amino acid family biosynthetic process"/>
    <property type="evidence" value="ECO:0007669"/>
    <property type="project" value="UniProtKB-KW"/>
</dbReference>
<dbReference type="GO" id="GO:0009423">
    <property type="term" value="P:chorismate biosynthetic process"/>
    <property type="evidence" value="ECO:0007669"/>
    <property type="project" value="UniProtKB-UniRule"/>
</dbReference>
<dbReference type="GO" id="GO:0019632">
    <property type="term" value="P:shikimate metabolic process"/>
    <property type="evidence" value="ECO:0007669"/>
    <property type="project" value="InterPro"/>
</dbReference>
<dbReference type="CDD" id="cd01065">
    <property type="entry name" value="NAD_bind_Shikimate_DH"/>
    <property type="match status" value="1"/>
</dbReference>
<dbReference type="FunFam" id="3.40.50.10860:FF:000006">
    <property type="entry name" value="Shikimate dehydrogenase (NADP(+))"/>
    <property type="match status" value="1"/>
</dbReference>
<dbReference type="Gene3D" id="3.40.50.10860">
    <property type="entry name" value="Leucine Dehydrogenase, chain A, domain 1"/>
    <property type="match status" value="1"/>
</dbReference>
<dbReference type="Gene3D" id="3.40.50.720">
    <property type="entry name" value="NAD(P)-binding Rossmann-like Domain"/>
    <property type="match status" value="1"/>
</dbReference>
<dbReference type="HAMAP" id="MF_00222">
    <property type="entry name" value="Shikimate_DH_AroE"/>
    <property type="match status" value="1"/>
</dbReference>
<dbReference type="InterPro" id="IPR046346">
    <property type="entry name" value="Aminoacid_DH-like_N_sf"/>
</dbReference>
<dbReference type="InterPro" id="IPR036291">
    <property type="entry name" value="NAD(P)-bd_dom_sf"/>
</dbReference>
<dbReference type="InterPro" id="IPR041121">
    <property type="entry name" value="SDH_C"/>
</dbReference>
<dbReference type="InterPro" id="IPR011342">
    <property type="entry name" value="Shikimate_DH"/>
</dbReference>
<dbReference type="InterPro" id="IPR013708">
    <property type="entry name" value="Shikimate_DH-bd_N"/>
</dbReference>
<dbReference type="InterPro" id="IPR022893">
    <property type="entry name" value="Shikimate_DH_fam"/>
</dbReference>
<dbReference type="InterPro" id="IPR006151">
    <property type="entry name" value="Shikm_DH/Glu-tRNA_Rdtase"/>
</dbReference>
<dbReference type="NCBIfam" id="TIGR00507">
    <property type="entry name" value="aroE"/>
    <property type="match status" value="1"/>
</dbReference>
<dbReference type="NCBIfam" id="NF001310">
    <property type="entry name" value="PRK00258.1-2"/>
    <property type="match status" value="1"/>
</dbReference>
<dbReference type="PANTHER" id="PTHR21089:SF1">
    <property type="entry name" value="BIFUNCTIONAL 3-DEHYDROQUINATE DEHYDRATASE_SHIKIMATE DEHYDROGENASE, CHLOROPLASTIC"/>
    <property type="match status" value="1"/>
</dbReference>
<dbReference type="PANTHER" id="PTHR21089">
    <property type="entry name" value="SHIKIMATE DEHYDROGENASE"/>
    <property type="match status" value="1"/>
</dbReference>
<dbReference type="Pfam" id="PF18317">
    <property type="entry name" value="SDH_C"/>
    <property type="match status" value="1"/>
</dbReference>
<dbReference type="Pfam" id="PF01488">
    <property type="entry name" value="Shikimate_DH"/>
    <property type="match status" value="1"/>
</dbReference>
<dbReference type="Pfam" id="PF08501">
    <property type="entry name" value="Shikimate_dh_N"/>
    <property type="match status" value="1"/>
</dbReference>
<dbReference type="SUPFAM" id="SSF53223">
    <property type="entry name" value="Aminoacid dehydrogenase-like, N-terminal domain"/>
    <property type="match status" value="1"/>
</dbReference>
<dbReference type="SUPFAM" id="SSF51735">
    <property type="entry name" value="NAD(P)-binding Rossmann-fold domains"/>
    <property type="match status" value="1"/>
</dbReference>
<proteinExistence type="inferred from homology"/>
<reference key="1">
    <citation type="journal article" date="2001" name="Proc. Natl. Acad. Sci. U.S.A.">
        <title>Complete genomic sequence of Pasteurella multocida Pm70.</title>
        <authorList>
            <person name="May B.J."/>
            <person name="Zhang Q."/>
            <person name="Li L.L."/>
            <person name="Paustian M.L."/>
            <person name="Whittam T.S."/>
            <person name="Kapur V."/>
        </authorList>
    </citation>
    <scope>NUCLEOTIDE SEQUENCE [LARGE SCALE GENOMIC DNA]</scope>
    <source>
        <strain>Pm70</strain>
    </source>
</reference>
<comment type="function">
    <text evidence="1">Involved in the biosynthesis of the chorismate, which leads to the biosynthesis of aromatic amino acids. Catalyzes the reversible NADPH linked reduction of 3-dehydroshikimate (DHSA) to yield shikimate (SA).</text>
</comment>
<comment type="catalytic activity">
    <reaction evidence="1">
        <text>shikimate + NADP(+) = 3-dehydroshikimate + NADPH + H(+)</text>
        <dbReference type="Rhea" id="RHEA:17737"/>
        <dbReference type="ChEBI" id="CHEBI:15378"/>
        <dbReference type="ChEBI" id="CHEBI:16630"/>
        <dbReference type="ChEBI" id="CHEBI:36208"/>
        <dbReference type="ChEBI" id="CHEBI:57783"/>
        <dbReference type="ChEBI" id="CHEBI:58349"/>
        <dbReference type="EC" id="1.1.1.25"/>
    </reaction>
</comment>
<comment type="pathway">
    <text evidence="1">Metabolic intermediate biosynthesis; chorismate biosynthesis; chorismate from D-erythrose 4-phosphate and phosphoenolpyruvate: step 4/7.</text>
</comment>
<comment type="subunit">
    <text evidence="1">Homodimer.</text>
</comment>
<comment type="similarity">
    <text evidence="1">Belongs to the shikimate dehydrogenase family.</text>
</comment>
<sequence>MDKYAVWGNPIAQSKSPQIHQIFANQTQQQMEYVAMLGDEQDFEQQLRVFFEKGAKGCNITAPFKERAFQLADLHSERCLTAEACNTLKKLDDGRLYGDNTDGAGLVSDLQRLGWLKPEQTILILGAGGATKGVLLPLLQAKQHIVLANRTLSKAEDLAQKFAQYGQIQAVELDNIPVQSFDLIINATSSGLHGQTVQMNPEILQNATALYDMQYAKQADTPFVALCKQLGKQNVSDGFGMLVAQAAHAFHLWRGVMPEFEALLEQEWL</sequence>